<dbReference type="EMBL" id="U55020">
    <property type="protein sequence ID" value="AAC49636.1"/>
    <property type="molecule type" value="Genomic_DNA"/>
</dbReference>
<dbReference type="EMBL" id="Z75058">
    <property type="protein sequence ID" value="CAA99356.1"/>
    <property type="molecule type" value="Genomic_DNA"/>
</dbReference>
<dbReference type="EMBL" id="AY558133">
    <property type="protein sequence ID" value="AAS56459.1"/>
    <property type="molecule type" value="Genomic_DNA"/>
</dbReference>
<dbReference type="EMBL" id="BK006948">
    <property type="protein sequence ID" value="DAA10923.1"/>
    <property type="molecule type" value="Genomic_DNA"/>
</dbReference>
<dbReference type="PIR" id="S67038">
    <property type="entry name" value="S67038"/>
</dbReference>
<dbReference type="RefSeq" id="NP_014793.1">
    <property type="nucleotide sequence ID" value="NM_001183569.1"/>
</dbReference>
<dbReference type="PDB" id="3J6B">
    <property type="method" value="EM"/>
    <property type="resolution" value="3.20 A"/>
    <property type="chains" value="H=1-163"/>
</dbReference>
<dbReference type="PDB" id="5MRC">
    <property type="method" value="EM"/>
    <property type="resolution" value="3.25 A"/>
    <property type="chains" value="H=2-161"/>
</dbReference>
<dbReference type="PDB" id="5MRE">
    <property type="method" value="EM"/>
    <property type="resolution" value="3.75 A"/>
    <property type="chains" value="H=2-161"/>
</dbReference>
<dbReference type="PDB" id="5MRF">
    <property type="method" value="EM"/>
    <property type="resolution" value="4.97 A"/>
    <property type="chains" value="H=2-161"/>
</dbReference>
<dbReference type="PDBsum" id="3J6B"/>
<dbReference type="PDBsum" id="5MRC"/>
<dbReference type="PDBsum" id="5MRE"/>
<dbReference type="PDBsum" id="5MRF"/>
<dbReference type="EMDB" id="EMD-3551"/>
<dbReference type="EMDB" id="EMD-3552"/>
<dbReference type="EMDB" id="EMD-3553"/>
<dbReference type="SMR" id="Q12487"/>
<dbReference type="BioGRID" id="34546">
    <property type="interactions" value="85"/>
</dbReference>
<dbReference type="ComplexPortal" id="CPX-1602">
    <property type="entry name" value="54S mitochondrial large ribosomal subunit"/>
</dbReference>
<dbReference type="DIP" id="DIP-5385N"/>
<dbReference type="FunCoup" id="Q12487">
    <property type="interactions" value="954"/>
</dbReference>
<dbReference type="IntAct" id="Q12487">
    <property type="interactions" value="70"/>
</dbReference>
<dbReference type="STRING" id="4932.YOR150W"/>
<dbReference type="iPTMnet" id="Q12487"/>
<dbReference type="PaxDb" id="4932-YOR150W"/>
<dbReference type="PeptideAtlas" id="Q12487"/>
<dbReference type="EnsemblFungi" id="YOR150W_mRNA">
    <property type="protein sequence ID" value="YOR150W"/>
    <property type="gene ID" value="YOR150W"/>
</dbReference>
<dbReference type="GeneID" id="854321"/>
<dbReference type="KEGG" id="sce:YOR150W"/>
<dbReference type="AGR" id="SGD:S000005676"/>
<dbReference type="SGD" id="S000005676">
    <property type="gene designation" value="MRPL23"/>
</dbReference>
<dbReference type="VEuPathDB" id="FungiDB:YOR150W"/>
<dbReference type="eggNOG" id="KOG3203">
    <property type="taxonomic scope" value="Eukaryota"/>
</dbReference>
<dbReference type="GeneTree" id="ENSGT00940000170656"/>
<dbReference type="HOGENOM" id="CLU_082184_1_1_1"/>
<dbReference type="InParanoid" id="Q12487"/>
<dbReference type="OMA" id="HKPIYTP"/>
<dbReference type="OrthoDB" id="274622at2759"/>
<dbReference type="BioCyc" id="YEAST:G3O-33667-MONOMER"/>
<dbReference type="BioGRID-ORCS" id="854321">
    <property type="hits" value="10 hits in 10 CRISPR screens"/>
</dbReference>
<dbReference type="PRO" id="PR:Q12487"/>
<dbReference type="Proteomes" id="UP000002311">
    <property type="component" value="Chromosome XV"/>
</dbReference>
<dbReference type="RNAct" id="Q12487">
    <property type="molecule type" value="protein"/>
</dbReference>
<dbReference type="GO" id="GO:0005743">
    <property type="term" value="C:mitochondrial inner membrane"/>
    <property type="evidence" value="ECO:0000303"/>
    <property type="project" value="ComplexPortal"/>
</dbReference>
<dbReference type="GO" id="GO:0005762">
    <property type="term" value="C:mitochondrial large ribosomal subunit"/>
    <property type="evidence" value="ECO:0000314"/>
    <property type="project" value="SGD"/>
</dbReference>
<dbReference type="GO" id="GO:0005739">
    <property type="term" value="C:mitochondrion"/>
    <property type="evidence" value="ECO:0007005"/>
    <property type="project" value="SGD"/>
</dbReference>
<dbReference type="GO" id="GO:0005840">
    <property type="term" value="C:ribosome"/>
    <property type="evidence" value="ECO:0000318"/>
    <property type="project" value="GO_Central"/>
</dbReference>
<dbReference type="GO" id="GO:0003729">
    <property type="term" value="F:mRNA binding"/>
    <property type="evidence" value="ECO:0000318"/>
    <property type="project" value="GO_Central"/>
</dbReference>
<dbReference type="GO" id="GO:0003735">
    <property type="term" value="F:structural constituent of ribosome"/>
    <property type="evidence" value="ECO:0000314"/>
    <property type="project" value="SGD"/>
</dbReference>
<dbReference type="GO" id="GO:0032543">
    <property type="term" value="P:mitochondrial translation"/>
    <property type="evidence" value="ECO:0000303"/>
    <property type="project" value="ComplexPortal"/>
</dbReference>
<dbReference type="GO" id="GO:0017148">
    <property type="term" value="P:negative regulation of translation"/>
    <property type="evidence" value="ECO:0000318"/>
    <property type="project" value="GO_Central"/>
</dbReference>
<dbReference type="CDD" id="cd00392">
    <property type="entry name" value="Ribosomal_L13"/>
    <property type="match status" value="1"/>
</dbReference>
<dbReference type="FunFam" id="3.90.1180.10:FF:000007">
    <property type="entry name" value="50S ribosomal protein L13"/>
    <property type="match status" value="1"/>
</dbReference>
<dbReference type="Gene3D" id="3.90.1180.10">
    <property type="entry name" value="Ribosomal protein L13"/>
    <property type="match status" value="1"/>
</dbReference>
<dbReference type="HAMAP" id="MF_01366">
    <property type="entry name" value="Ribosomal_uL13"/>
    <property type="match status" value="1"/>
</dbReference>
<dbReference type="InterPro" id="IPR005822">
    <property type="entry name" value="Ribosomal_uL13"/>
</dbReference>
<dbReference type="InterPro" id="IPR005823">
    <property type="entry name" value="Ribosomal_uL13_bac-type"/>
</dbReference>
<dbReference type="InterPro" id="IPR023563">
    <property type="entry name" value="Ribosomal_uL13_CS"/>
</dbReference>
<dbReference type="InterPro" id="IPR036899">
    <property type="entry name" value="Ribosomal_uL13_sf"/>
</dbReference>
<dbReference type="NCBIfam" id="TIGR01066">
    <property type="entry name" value="rplM_bact"/>
    <property type="match status" value="1"/>
</dbReference>
<dbReference type="PANTHER" id="PTHR11545:SF2">
    <property type="entry name" value="LARGE RIBOSOMAL SUBUNIT PROTEIN UL13M"/>
    <property type="match status" value="1"/>
</dbReference>
<dbReference type="PANTHER" id="PTHR11545">
    <property type="entry name" value="RIBOSOMAL PROTEIN L13"/>
    <property type="match status" value="1"/>
</dbReference>
<dbReference type="Pfam" id="PF00572">
    <property type="entry name" value="Ribosomal_L13"/>
    <property type="match status" value="1"/>
</dbReference>
<dbReference type="PIRSF" id="PIRSF002181">
    <property type="entry name" value="Ribosomal_L13"/>
    <property type="match status" value="1"/>
</dbReference>
<dbReference type="SUPFAM" id="SSF52161">
    <property type="entry name" value="Ribosomal protein L13"/>
    <property type="match status" value="1"/>
</dbReference>
<dbReference type="PROSITE" id="PS00783">
    <property type="entry name" value="RIBOSOMAL_L13"/>
    <property type="match status" value="1"/>
</dbReference>
<organism>
    <name type="scientific">Saccharomyces cerevisiae (strain ATCC 204508 / S288c)</name>
    <name type="common">Baker's yeast</name>
    <dbReference type="NCBI Taxonomy" id="559292"/>
    <lineage>
        <taxon>Eukaryota</taxon>
        <taxon>Fungi</taxon>
        <taxon>Dikarya</taxon>
        <taxon>Ascomycota</taxon>
        <taxon>Saccharomycotina</taxon>
        <taxon>Saccharomycetes</taxon>
        <taxon>Saccharomycetales</taxon>
        <taxon>Saccharomycetaceae</taxon>
        <taxon>Saccharomyces</taxon>
    </lineage>
</organism>
<protein>
    <recommendedName>
        <fullName evidence="8">Large ribosomal subunit protein uL13m</fullName>
    </recommendedName>
    <alternativeName>
        <fullName>54S ribosomal protein L23, mitochondrial</fullName>
    </alternativeName>
    <alternativeName>
        <fullName>YmL23</fullName>
    </alternativeName>
</protein>
<sequence length="163" mass="18463">MSQKIGHSGLAFARLWHHVDVARDKRTLGRLASAIAITLIGRHKPVYHPSQDCGDYVVVTNCQKIRVTGKKFEQKTYWSHSGRPGQLKLQTMNKVVADKGFGEILKKAVSGMLPKNKLRKQRLDRLKVFDGSENPYKQNITAFAHEQSSIPEPLKESIFNQLK</sequence>
<gene>
    <name type="primary">MRPL23</name>
    <name type="ordered locus">YOR150W</name>
    <name type="ORF">O3530</name>
</gene>
<name>RM23_YEAST</name>
<proteinExistence type="evidence at protein level"/>
<evidence type="ECO:0000269" key="1">
    <source>
    </source>
</evidence>
<evidence type="ECO:0000269" key="2">
    <source>
    </source>
</evidence>
<evidence type="ECO:0000269" key="3">
    <source>
    </source>
</evidence>
<evidence type="ECO:0000269" key="4">
    <source>
    </source>
</evidence>
<evidence type="ECO:0000269" key="5">
    <source>
    </source>
</evidence>
<evidence type="ECO:0000269" key="6">
    <source>
    </source>
</evidence>
<evidence type="ECO:0000269" key="7">
    <source>
    </source>
</evidence>
<evidence type="ECO:0000303" key="8">
    <source>
    </source>
</evidence>
<evidence type="ECO:0000305" key="9"/>
<evidence type="ECO:0000305" key="10">
    <source>
    </source>
</evidence>
<evidence type="ECO:0000305" key="11">
    <source>
    </source>
</evidence>
<evidence type="ECO:0007744" key="12">
    <source>
    </source>
</evidence>
<accession>Q12487</accession>
<accession>D6W2K7</accession>
<reference key="1">
    <citation type="journal article" date="1997" name="Yeast">
        <title>Analysis of a 35.6 kb region on the right arm of Saccharomyces cerevisiae chromosome XV.</title>
        <authorList>
            <person name="Bordonne R."/>
            <person name="Camasses A."/>
            <person name="Madania A."/>
            <person name="Poch O."/>
            <person name="Tarassov I.A."/>
            <person name="Winsor B."/>
            <person name="Martin R.P."/>
        </authorList>
    </citation>
    <scope>NUCLEOTIDE SEQUENCE [GENOMIC DNA]</scope>
    <source>
        <strain>S288c / FY1678</strain>
    </source>
</reference>
<reference key="2">
    <citation type="journal article" date="1997" name="Nature">
        <title>The nucleotide sequence of Saccharomyces cerevisiae chromosome XV.</title>
        <authorList>
            <person name="Dujon B."/>
            <person name="Albermann K."/>
            <person name="Aldea M."/>
            <person name="Alexandraki D."/>
            <person name="Ansorge W."/>
            <person name="Arino J."/>
            <person name="Benes V."/>
            <person name="Bohn C."/>
            <person name="Bolotin-Fukuhara M."/>
            <person name="Bordonne R."/>
            <person name="Boyer J."/>
            <person name="Camasses A."/>
            <person name="Casamayor A."/>
            <person name="Casas C."/>
            <person name="Cheret G."/>
            <person name="Cziepluch C."/>
            <person name="Daignan-Fornier B."/>
            <person name="Dang V.-D."/>
            <person name="de Haan M."/>
            <person name="Delius H."/>
            <person name="Durand P."/>
            <person name="Fairhead C."/>
            <person name="Feldmann H."/>
            <person name="Gaillon L."/>
            <person name="Galisson F."/>
            <person name="Gamo F.-J."/>
            <person name="Gancedo C."/>
            <person name="Goffeau A."/>
            <person name="Goulding S.E."/>
            <person name="Grivell L.A."/>
            <person name="Habbig B."/>
            <person name="Hand N.J."/>
            <person name="Hani J."/>
            <person name="Hattenhorst U."/>
            <person name="Hebling U."/>
            <person name="Hernando Y."/>
            <person name="Herrero E."/>
            <person name="Heumann K."/>
            <person name="Hiesel R."/>
            <person name="Hilger F."/>
            <person name="Hofmann B."/>
            <person name="Hollenberg C.P."/>
            <person name="Hughes B."/>
            <person name="Jauniaux J.-C."/>
            <person name="Kalogeropoulos A."/>
            <person name="Katsoulou C."/>
            <person name="Kordes E."/>
            <person name="Lafuente M.J."/>
            <person name="Landt O."/>
            <person name="Louis E.J."/>
            <person name="Maarse A.C."/>
            <person name="Madania A."/>
            <person name="Mannhaupt G."/>
            <person name="Marck C."/>
            <person name="Martin R.P."/>
            <person name="Mewes H.-W."/>
            <person name="Michaux G."/>
            <person name="Paces V."/>
            <person name="Parle-McDermott A.G."/>
            <person name="Pearson B.M."/>
            <person name="Perrin A."/>
            <person name="Pettersson B."/>
            <person name="Poch O."/>
            <person name="Pohl T.M."/>
            <person name="Poirey R."/>
            <person name="Portetelle D."/>
            <person name="Pujol A."/>
            <person name="Purnelle B."/>
            <person name="Ramezani Rad M."/>
            <person name="Rechmann S."/>
            <person name="Schwager C."/>
            <person name="Schweizer M."/>
            <person name="Sor F."/>
            <person name="Sterky F."/>
            <person name="Tarassov I.A."/>
            <person name="Teodoru C."/>
            <person name="Tettelin H."/>
            <person name="Thierry A."/>
            <person name="Tobiasch E."/>
            <person name="Tzermia M."/>
            <person name="Uhlen M."/>
            <person name="Unseld M."/>
            <person name="Valens M."/>
            <person name="Vandenbol M."/>
            <person name="Vetter I."/>
            <person name="Vlcek C."/>
            <person name="Voet M."/>
            <person name="Volckaert G."/>
            <person name="Voss H."/>
            <person name="Wambutt R."/>
            <person name="Wedler H."/>
            <person name="Wiemann S."/>
            <person name="Winsor B."/>
            <person name="Wolfe K.H."/>
            <person name="Zollner A."/>
            <person name="Zumstein E."/>
            <person name="Kleine K."/>
        </authorList>
    </citation>
    <scope>NUCLEOTIDE SEQUENCE [LARGE SCALE GENOMIC DNA]</scope>
    <source>
        <strain>ATCC 204508 / S288c</strain>
    </source>
</reference>
<reference key="3">
    <citation type="journal article" date="2014" name="G3 (Bethesda)">
        <title>The reference genome sequence of Saccharomyces cerevisiae: Then and now.</title>
        <authorList>
            <person name="Engel S.R."/>
            <person name="Dietrich F.S."/>
            <person name="Fisk D.G."/>
            <person name="Binkley G."/>
            <person name="Balakrishnan R."/>
            <person name="Costanzo M.C."/>
            <person name="Dwight S.S."/>
            <person name="Hitz B.C."/>
            <person name="Karra K."/>
            <person name="Nash R.S."/>
            <person name="Weng S."/>
            <person name="Wong E.D."/>
            <person name="Lloyd P."/>
            <person name="Skrzypek M.S."/>
            <person name="Miyasato S.R."/>
            <person name="Simison M."/>
            <person name="Cherry J.M."/>
        </authorList>
    </citation>
    <scope>GENOME REANNOTATION</scope>
    <source>
        <strain>ATCC 204508 / S288c</strain>
    </source>
</reference>
<reference key="4">
    <citation type="journal article" date="2007" name="Genome Res.">
        <title>Approaching a complete repository of sequence-verified protein-encoding clones for Saccharomyces cerevisiae.</title>
        <authorList>
            <person name="Hu Y."/>
            <person name="Rolfs A."/>
            <person name="Bhullar B."/>
            <person name="Murthy T.V.S."/>
            <person name="Zhu C."/>
            <person name="Berger M.F."/>
            <person name="Camargo A.A."/>
            <person name="Kelley F."/>
            <person name="McCarron S."/>
            <person name="Jepson D."/>
            <person name="Richardson A."/>
            <person name="Raphael J."/>
            <person name="Moreira D."/>
            <person name="Taycher E."/>
            <person name="Zuo D."/>
            <person name="Mohr S."/>
            <person name="Kane M.F."/>
            <person name="Williamson J."/>
            <person name="Simpson A.J.G."/>
            <person name="Bulyk M.L."/>
            <person name="Harlow E."/>
            <person name="Marsischky G."/>
            <person name="Kolodner R.D."/>
            <person name="LaBaer J."/>
        </authorList>
    </citation>
    <scope>NUCLEOTIDE SEQUENCE [GENOMIC DNA]</scope>
    <source>
        <strain>ATCC 204508 / S288c</strain>
    </source>
</reference>
<reference key="5">
    <citation type="journal article" date="1997" name="Eur. J. Biochem.">
        <title>Identification and characterization of the genes for mitochondrial ribosomal proteins of Saccharomyces cerevisiae.</title>
        <authorList>
            <person name="Kitakawa M."/>
            <person name="Graack H.-R."/>
            <person name="Grohmann L."/>
            <person name="Goldschmidt-Reisin S."/>
            <person name="Herfurth E."/>
            <person name="Wittmann-Liebold B."/>
            <person name="Nishimura T."/>
            <person name="Isono K."/>
        </authorList>
    </citation>
    <scope>PROTEIN SEQUENCE OF 5-18</scope>
    <scope>SUBUNIT</scope>
    <source>
        <strain>07173</strain>
    </source>
</reference>
<reference key="6">
    <citation type="journal article" date="2002" name="Eur. J. Biochem.">
        <title>Tag-mediated isolation of yeast mitochondrial ribosome and mass spectrometric identification of its new components.</title>
        <authorList>
            <person name="Gan X."/>
            <person name="Kitakawa M."/>
            <person name="Yoshino K."/>
            <person name="Oshiro N."/>
            <person name="Yonezawa K."/>
            <person name="Isono K."/>
        </authorList>
    </citation>
    <scope>IDENTIFICATION IN THE MITOCHONDRIAL RIBOSOMAL LARGE COMPLEX</scope>
    <scope>IDENTIFICATION BY MASS SPECTROMETRY</scope>
</reference>
<reference key="7">
    <citation type="journal article" date="2003" name="Nature">
        <title>Global analysis of protein localization in budding yeast.</title>
        <authorList>
            <person name="Huh W.-K."/>
            <person name="Falvo J.V."/>
            <person name="Gerke L.C."/>
            <person name="Carroll A.S."/>
            <person name="Howson R.W."/>
            <person name="Weissman J.S."/>
            <person name="O'Shea E.K."/>
        </authorList>
    </citation>
    <scope>SUBCELLULAR LOCATION [LARGE SCALE ANALYSIS]</scope>
</reference>
<reference key="8">
    <citation type="journal article" date="2003" name="Nature">
        <title>Global analysis of protein expression in yeast.</title>
        <authorList>
            <person name="Ghaemmaghami S."/>
            <person name="Huh W.-K."/>
            <person name="Bower K."/>
            <person name="Howson R.W."/>
            <person name="Belle A."/>
            <person name="Dephoure N."/>
            <person name="O'Shea E.K."/>
            <person name="Weissman J.S."/>
        </authorList>
    </citation>
    <scope>LEVEL OF PROTEIN EXPRESSION [LARGE SCALE ANALYSIS]</scope>
</reference>
<reference key="9">
    <citation type="journal article" date="2003" name="Proc. Natl. Acad. Sci. U.S.A.">
        <title>The proteome of Saccharomyces cerevisiae mitochondria.</title>
        <authorList>
            <person name="Sickmann A."/>
            <person name="Reinders J."/>
            <person name="Wagner Y."/>
            <person name="Joppich C."/>
            <person name="Zahedi R.P."/>
            <person name="Meyer H.E."/>
            <person name="Schoenfisch B."/>
            <person name="Perschil I."/>
            <person name="Chacinska A."/>
            <person name="Guiard B."/>
            <person name="Rehling P."/>
            <person name="Pfanner N."/>
            <person name="Meisinger C."/>
        </authorList>
    </citation>
    <scope>SUBCELLULAR LOCATION [LARGE SCALE ANALYSIS]</scope>
    <source>
        <strain>ATCC 76625 / YPH499</strain>
    </source>
</reference>
<reference key="10">
    <citation type="journal article" date="2012" name="Proc. Natl. Acad. Sci. U.S.A.">
        <title>N-terminal acetylome analyses and functional insights of the N-terminal acetyltransferase NatB.</title>
        <authorList>
            <person name="Van Damme P."/>
            <person name="Lasa M."/>
            <person name="Polevoda B."/>
            <person name="Gazquez C."/>
            <person name="Elosegui-Artola A."/>
            <person name="Kim D.S."/>
            <person name="De Juan-Pardo E."/>
            <person name="Demeyer K."/>
            <person name="Hole K."/>
            <person name="Larrea E."/>
            <person name="Timmerman E."/>
            <person name="Prieto J."/>
            <person name="Arnesen T."/>
            <person name="Sherman F."/>
            <person name="Gevaert K."/>
            <person name="Aldabe R."/>
        </authorList>
    </citation>
    <scope>ACETYLATION [LARGE SCALE ANALYSIS] AT SER-2</scope>
    <scope>CLEAVAGE OF INITIATOR METHIONINE [LARGE SCALE ANALYSIS]</scope>
    <scope>IDENTIFICATION BY MASS SPECTROMETRY [LARGE SCALE ANALYSIS]</scope>
</reference>
<reference key="11">
    <citation type="journal article" date="2015" name="Nat. Commun.">
        <title>Organization of the mitochondrial translation machinery studied in situ by cryoelectron tomography.</title>
        <authorList>
            <person name="Pfeffer S."/>
            <person name="Woellhaf M.W."/>
            <person name="Herrmann J.M."/>
            <person name="Forster F."/>
        </authorList>
    </citation>
    <scope>SUBCELLULAR LOCATION</scope>
</reference>
<reference key="12">
    <citation type="journal article" date="2014" name="Science">
        <title>Structure of the yeast mitochondrial large ribosomal subunit.</title>
        <authorList>
            <person name="Amunts A."/>
            <person name="Brown A."/>
            <person name="Bai X.C."/>
            <person name="Llacer J.L."/>
            <person name="Hussain T."/>
            <person name="Emsley P."/>
            <person name="Long F."/>
            <person name="Murshudov G."/>
            <person name="Scheres S.H."/>
            <person name="Ramakrishnan V."/>
        </authorList>
    </citation>
    <scope>STRUCTURE BY ELECTRON MICROSCOPY (3.20 ANGSTROMS)</scope>
    <scope>SUBUNIT</scope>
</reference>
<keyword id="KW-0002">3D-structure</keyword>
<keyword id="KW-0007">Acetylation</keyword>
<keyword id="KW-0903">Direct protein sequencing</keyword>
<keyword id="KW-0496">Mitochondrion</keyword>
<keyword id="KW-1185">Reference proteome</keyword>
<keyword id="KW-0687">Ribonucleoprotein</keyword>
<keyword id="KW-0689">Ribosomal protein</keyword>
<feature type="initiator methionine" description="Removed" evidence="12">
    <location>
        <position position="1"/>
    </location>
</feature>
<feature type="propeptide" id="PRO_0000030462" evidence="7">
    <location>
        <begin position="2"/>
        <end position="4"/>
    </location>
</feature>
<feature type="chain" id="PRO_0000030463" description="Large ribosomal subunit protein uL13m">
    <location>
        <begin position="5"/>
        <end position="163"/>
    </location>
</feature>
<feature type="modified residue" description="N-acetylserine" evidence="12">
    <location>
        <position position="2"/>
    </location>
</feature>
<feature type="sequence conflict" description="In Ref. 5; AA sequence." evidence="9" ref="5">
    <original>I</original>
    <variation>K</variation>
    <location>
        <position position="5"/>
    </location>
</feature>
<comment type="function">
    <text evidence="10 11">Component of the mitochondrial ribosome (mitoribosome), a dedicated translation machinery responsible for the synthesis of mitochondrial genome-encoded proteins, including at least some of the essential transmembrane subunits of the mitochondrial respiratory chain. The mitoribosomes are attached to the mitochondrial inner membrane and translation products are cotranslationally integrated into the membrane.</text>
</comment>
<comment type="subunit">
    <text evidence="1 5 7">Component of the mitochondrial large ribosomal subunit (mt-LSU). Mature yeast 74S mitochondrial ribosomes consist of a small (37S) and a large (54S) subunit. The 37S small subunit contains a 15S ribosomal RNA (15S mt-rRNA) and 34 different proteins. The 54S large subunit contains a 21S rRNA (21S mt-rRNA) and 46 different proteins.</text>
</comment>
<comment type="subcellular location">
    <subcellularLocation>
        <location evidence="2 4">Mitochondrion</location>
    </subcellularLocation>
    <text evidence="6">Mitoribosomes are tethered to the mitochondrial inner membrane and spatially aligned with the membrane insertion machinery through two distinct membrane contact sites, formed by the 21S rRNA expansion segment 96-ES1 and the inner membrane protein MBA1.</text>
</comment>
<comment type="miscellaneous">
    <text evidence="3">Present with 6700 molecules/cell in log phase SD medium.</text>
</comment>
<comment type="similarity">
    <text evidence="9">Belongs to the universal ribosomal protein uL13 family.</text>
</comment>